<accession>A0AKG4</accession>
<sequence length="305" mass="34572">MKKFLKVWSVLTIICMTVVVFGGALVTKTGSADGCGNSWPLCNGQLVRLTDVTPEKLIEFMHRMTTGISSIFVIVLAICAWIYMKNRRETKPLAIIAVLFLIIQALMGMAAVVWGQNPYIMALHFGISIICYASIVLLALMIFEVDRKFDARNLVMGTKLRINIYALTIYTYLAVYTGALVRHEKASMAVPVWPFENGKFIMPDSVQDYVQYFHRVAAFILIVWLLYVTWLVFRDYRRYRVLTFSMVLSLLFIALQAVTGALSVYTGVNLYIALAHSLIITMLFALLCYLCLLASRSKSNRLRIK</sequence>
<feature type="chain" id="PRO_0000348984" description="Heme A synthase">
    <location>
        <begin position="1"/>
        <end position="305"/>
    </location>
</feature>
<feature type="topological domain" description="Cytoplasmic" evidence="1">
    <location>
        <begin position="1"/>
        <end position="6"/>
    </location>
</feature>
<feature type="transmembrane region" description="Helical" evidence="1">
    <location>
        <begin position="7"/>
        <end position="27"/>
    </location>
</feature>
<feature type="topological domain" description="Extracellular" evidence="1">
    <location>
        <begin position="28"/>
        <end position="63"/>
    </location>
</feature>
<feature type="transmembrane region" description="Helical" evidence="1">
    <location>
        <begin position="64"/>
        <end position="84"/>
    </location>
</feature>
<feature type="topological domain" description="Cytoplasmic" evidence="1">
    <location>
        <begin position="85"/>
        <end position="92"/>
    </location>
</feature>
<feature type="transmembrane region" description="Helical" evidence="1">
    <location>
        <begin position="93"/>
        <end position="113"/>
    </location>
</feature>
<feature type="topological domain" description="Extracellular" evidence="1">
    <location>
        <begin position="114"/>
        <end position="122"/>
    </location>
</feature>
<feature type="transmembrane region" description="Helical" evidence="1">
    <location>
        <begin position="123"/>
        <end position="143"/>
    </location>
</feature>
<feature type="topological domain" description="Cytoplasmic" evidence="1">
    <location>
        <begin position="144"/>
        <end position="160"/>
    </location>
</feature>
<feature type="transmembrane region" description="Helical" evidence="1">
    <location>
        <begin position="161"/>
        <end position="181"/>
    </location>
</feature>
<feature type="topological domain" description="Extracellular" evidence="1">
    <location>
        <begin position="182"/>
        <end position="212"/>
    </location>
</feature>
<feature type="transmembrane region" description="Helical" evidence="1">
    <location>
        <begin position="213"/>
        <end position="233"/>
    </location>
</feature>
<feature type="topological domain" description="Cytoplasmic" evidence="1">
    <location>
        <begin position="234"/>
        <end position="240"/>
    </location>
</feature>
<feature type="transmembrane region" description="Helical" evidence="1">
    <location>
        <begin position="241"/>
        <end position="261"/>
    </location>
</feature>
<feature type="topological domain" description="Extracellular" evidence="1">
    <location>
        <begin position="262"/>
        <end position="271"/>
    </location>
</feature>
<feature type="transmembrane region" description="Helical" evidence="1">
    <location>
        <begin position="272"/>
        <end position="292"/>
    </location>
</feature>
<feature type="topological domain" description="Cytoplasmic" evidence="1">
    <location>
        <begin position="293"/>
        <end position="305"/>
    </location>
</feature>
<feature type="active site" evidence="1">
    <location>
        <position position="59"/>
    </location>
</feature>
<feature type="binding site" description="axial binding residue" evidence="1">
    <location>
        <position position="62"/>
    </location>
    <ligand>
        <name>heme o</name>
        <dbReference type="ChEBI" id="CHEBI:24480"/>
    </ligand>
    <ligandPart>
        <name>Fe</name>
        <dbReference type="ChEBI" id="CHEBI:18248"/>
    </ligandPart>
</feature>
<feature type="binding site" description="axial binding residue" evidence="1">
    <location>
        <position position="124"/>
    </location>
    <ligand>
        <name>heme o</name>
        <dbReference type="ChEBI" id="CHEBI:24480"/>
    </ligand>
    <ligandPart>
        <name>Fe</name>
        <dbReference type="ChEBI" id="CHEBI:18248"/>
    </ligandPart>
</feature>
<feature type="binding site" description="axial binding residue" evidence="1">
    <location>
        <position position="214"/>
    </location>
    <ligand>
        <name>heme b</name>
        <dbReference type="ChEBI" id="CHEBI:60344"/>
    </ligand>
    <ligandPart>
        <name>Fe</name>
        <dbReference type="ChEBI" id="CHEBI:18248"/>
    </ligandPart>
</feature>
<feature type="binding site" description="axial binding residue" evidence="1">
    <location>
        <position position="276"/>
    </location>
    <ligand>
        <name>heme b</name>
        <dbReference type="ChEBI" id="CHEBI:60344"/>
    </ligand>
    <ligandPart>
        <name>Fe</name>
        <dbReference type="ChEBI" id="CHEBI:18248"/>
    </ligandPart>
</feature>
<feature type="disulfide bond" description="Essential for catalytic activity" evidence="1">
    <location>
        <begin position="35"/>
        <end position="42"/>
    </location>
</feature>
<reference key="1">
    <citation type="journal article" date="2006" name="J. Bacteriol.">
        <title>Whole-genome sequence of Listeria welshimeri reveals common steps in genome reduction with Listeria innocua as compared to Listeria monocytogenes.</title>
        <authorList>
            <person name="Hain T."/>
            <person name="Steinweg C."/>
            <person name="Kuenne C.T."/>
            <person name="Billion A."/>
            <person name="Ghai R."/>
            <person name="Chatterjee S.S."/>
            <person name="Domann E."/>
            <person name="Kaerst U."/>
            <person name="Goesmann A."/>
            <person name="Bekel T."/>
            <person name="Bartels D."/>
            <person name="Kaiser O."/>
            <person name="Meyer F."/>
            <person name="Puehler A."/>
            <person name="Weisshaar B."/>
            <person name="Wehland J."/>
            <person name="Liang C."/>
            <person name="Dandekar T."/>
            <person name="Lampidis R."/>
            <person name="Kreft J."/>
            <person name="Goebel W."/>
            <person name="Chakraborty T."/>
        </authorList>
    </citation>
    <scope>NUCLEOTIDE SEQUENCE [LARGE SCALE GENOMIC DNA]</scope>
    <source>
        <strain>ATCC 35897 / DSM 20650 / CCUG 15529 / CIP 8149 / NCTC 11857 / SLCC 5334 / V8</strain>
    </source>
</reference>
<organism>
    <name type="scientific">Listeria welshimeri serovar 6b (strain ATCC 35897 / DSM 20650 / CCUG 15529 / CIP 8149 / NCTC 11857 / SLCC 5334 / V8)</name>
    <dbReference type="NCBI Taxonomy" id="386043"/>
    <lineage>
        <taxon>Bacteria</taxon>
        <taxon>Bacillati</taxon>
        <taxon>Bacillota</taxon>
        <taxon>Bacilli</taxon>
        <taxon>Bacillales</taxon>
        <taxon>Listeriaceae</taxon>
        <taxon>Listeria</taxon>
    </lineage>
</organism>
<gene>
    <name evidence="1" type="primary">ctaA</name>
    <name type="ordered locus">lwe2078</name>
</gene>
<name>CTAA_LISW6</name>
<proteinExistence type="inferred from homology"/>
<dbReference type="EC" id="1.17.99.9" evidence="1"/>
<dbReference type="EMBL" id="AM263198">
    <property type="protein sequence ID" value="CAK21496.1"/>
    <property type="molecule type" value="Genomic_DNA"/>
</dbReference>
<dbReference type="RefSeq" id="WP_011702837.1">
    <property type="nucleotide sequence ID" value="NC_008555.1"/>
</dbReference>
<dbReference type="SMR" id="A0AKG4"/>
<dbReference type="STRING" id="386043.lwe2078"/>
<dbReference type="GeneID" id="61189978"/>
<dbReference type="KEGG" id="lwe:lwe2078"/>
<dbReference type="eggNOG" id="COG1612">
    <property type="taxonomic scope" value="Bacteria"/>
</dbReference>
<dbReference type="HOGENOM" id="CLU_041525_3_1_9"/>
<dbReference type="OrthoDB" id="9816428at2"/>
<dbReference type="UniPathway" id="UPA00269">
    <property type="reaction ID" value="UER00713"/>
</dbReference>
<dbReference type="Proteomes" id="UP000000779">
    <property type="component" value="Chromosome"/>
</dbReference>
<dbReference type="GO" id="GO:0005886">
    <property type="term" value="C:plasma membrane"/>
    <property type="evidence" value="ECO:0007669"/>
    <property type="project" value="UniProtKB-SubCell"/>
</dbReference>
<dbReference type="GO" id="GO:0046872">
    <property type="term" value="F:metal ion binding"/>
    <property type="evidence" value="ECO:0007669"/>
    <property type="project" value="UniProtKB-KW"/>
</dbReference>
<dbReference type="GO" id="GO:0016653">
    <property type="term" value="F:oxidoreductase activity, acting on NAD(P)H, heme protein as acceptor"/>
    <property type="evidence" value="ECO:0007669"/>
    <property type="project" value="InterPro"/>
</dbReference>
<dbReference type="GO" id="GO:0006784">
    <property type="term" value="P:heme A biosynthetic process"/>
    <property type="evidence" value="ECO:0007669"/>
    <property type="project" value="UniProtKB-UniRule"/>
</dbReference>
<dbReference type="HAMAP" id="MF_01664">
    <property type="entry name" value="HemeA_synth_type1"/>
    <property type="match status" value="1"/>
</dbReference>
<dbReference type="InterPro" id="IPR003780">
    <property type="entry name" value="COX15/CtaA_fam"/>
</dbReference>
<dbReference type="InterPro" id="IPR050450">
    <property type="entry name" value="COX15/CtaA_HemeA_synthase"/>
</dbReference>
<dbReference type="InterPro" id="IPR023755">
    <property type="entry name" value="HemeA_Synthase_type1"/>
</dbReference>
<dbReference type="PANTHER" id="PTHR35457">
    <property type="entry name" value="HEME A SYNTHASE"/>
    <property type="match status" value="1"/>
</dbReference>
<dbReference type="PANTHER" id="PTHR35457:SF1">
    <property type="entry name" value="HEME A SYNTHASE"/>
    <property type="match status" value="1"/>
</dbReference>
<dbReference type="Pfam" id="PF02628">
    <property type="entry name" value="COX15-CtaA"/>
    <property type="match status" value="1"/>
</dbReference>
<evidence type="ECO:0000255" key="1">
    <source>
        <dbReference type="HAMAP-Rule" id="MF_01664"/>
    </source>
</evidence>
<comment type="function">
    <text evidence="1">Catalyzes the conversion of heme O to heme A by two successive hydroxylations of the methyl group at C8. The first hydroxylation forms heme I, the second hydroxylation results in an unstable dihydroxymethyl group, which spontaneously dehydrates, resulting in the formyl group of heme A.</text>
</comment>
<comment type="catalytic activity">
    <reaction evidence="1">
        <text>Fe(II)-heme o + 2 A + H2O = Fe(II)-heme a + 2 AH2</text>
        <dbReference type="Rhea" id="RHEA:63388"/>
        <dbReference type="ChEBI" id="CHEBI:13193"/>
        <dbReference type="ChEBI" id="CHEBI:15377"/>
        <dbReference type="ChEBI" id="CHEBI:17499"/>
        <dbReference type="ChEBI" id="CHEBI:60530"/>
        <dbReference type="ChEBI" id="CHEBI:61715"/>
        <dbReference type="EC" id="1.17.99.9"/>
    </reaction>
    <physiologicalReaction direction="left-to-right" evidence="1">
        <dbReference type="Rhea" id="RHEA:63389"/>
    </physiologicalReaction>
</comment>
<comment type="cofactor">
    <cofactor evidence="1">
        <name>heme b</name>
        <dbReference type="ChEBI" id="CHEBI:60344"/>
    </cofactor>
</comment>
<comment type="pathway">
    <text evidence="1">Porphyrin-containing compound metabolism; heme A biosynthesis; heme A from heme O: step 1/1.</text>
</comment>
<comment type="subunit">
    <text evidence="1">Interacts with CtaB.</text>
</comment>
<comment type="subcellular location">
    <subcellularLocation>
        <location evidence="1">Cell membrane</location>
        <topology evidence="1">Multi-pass membrane protein</topology>
    </subcellularLocation>
</comment>
<comment type="domain">
    <text evidence="1">The N-half (TM1-TM4) and C-half (TM5-TM8) domains are connected by an intracellular loop. Each domain is formed from four-helix bundles and they align in a pseudo twofold symmetry manner. The N-half domain is the substrate-heme O binding domain and the C-half domain is the cofactor heme B binding domain.</text>
</comment>
<comment type="domain">
    <text evidence="1">The cysteines of disulfide bond Cys-35 and Cys-42 may be involved in transfer of reducing equivalents from quinol in the membrane to the active site of the enzyme.</text>
</comment>
<comment type="similarity">
    <text evidence="1">Belongs to the COX15/CtaA family. Type 1 subfamily.</text>
</comment>
<keyword id="KW-1003">Cell membrane</keyword>
<keyword id="KW-1015">Disulfide bond</keyword>
<keyword id="KW-0350">Heme biosynthesis</keyword>
<keyword id="KW-0408">Iron</keyword>
<keyword id="KW-0472">Membrane</keyword>
<keyword id="KW-0479">Metal-binding</keyword>
<keyword id="KW-0560">Oxidoreductase</keyword>
<keyword id="KW-0812">Transmembrane</keyword>
<keyword id="KW-1133">Transmembrane helix</keyword>
<protein>
    <recommendedName>
        <fullName evidence="1">Heme A synthase</fullName>
        <shortName evidence="1">HAS</shortName>
        <ecNumber evidence="1">1.17.99.9</ecNumber>
    </recommendedName>
    <alternativeName>
        <fullName evidence="1">Cytochrome aa3-controlling protein</fullName>
    </alternativeName>
</protein>